<feature type="chain" id="PRO_0000099823" description="Light-harvesting protein B-800/850 beta chain">
    <location>
        <begin position="1"/>
        <end position="49"/>
    </location>
</feature>
<feature type="topological domain" description="Cytoplasmic" evidence="1">
    <location>
        <begin position="1"/>
        <end position="21"/>
    </location>
</feature>
<feature type="transmembrane region" description="Helical" evidence="1">
    <location>
        <begin position="22"/>
        <end position="44"/>
    </location>
</feature>
<feature type="topological domain" description="Periplasmic" evidence="1">
    <location>
        <begin position="45"/>
        <end position="49"/>
    </location>
</feature>
<feature type="binding site" description="axial binding residue" evidence="1">
    <location>
        <position position="20"/>
    </location>
    <ligand>
        <name>a bacteriochlorophyll</name>
        <dbReference type="ChEBI" id="CHEBI:38201"/>
    </ligand>
    <ligandPart>
        <name>Mg</name>
        <dbReference type="ChEBI" id="CHEBI:25107"/>
    </ligandPart>
</feature>
<feature type="binding site" description="axial binding residue" evidence="1">
    <location>
        <position position="38"/>
    </location>
    <ligand>
        <name>a bacteriochlorophyll</name>
        <dbReference type="ChEBI" id="CHEBI:38201"/>
    </ligand>
    <ligandPart>
        <name>Mg</name>
        <dbReference type="ChEBI" id="CHEBI:25107"/>
    </ligandPart>
</feature>
<feature type="modified residue" description="N-formylmethionine; partial" evidence="2">
    <location>
        <position position="1"/>
    </location>
</feature>
<gene>
    <name type="primary">pucB</name>
</gene>
<name>LHB2_RHOCA</name>
<comment type="function">
    <text>Antenna complexes are light-harvesting systems, which transfer the excitation energy to the reaction centers.</text>
</comment>
<comment type="subunit">
    <text>The core complex is formed by different alpha and beta chains, binding bacteriochlorophyll molecules, and arranged most probably in tetrameric structures disposed around the reaction center. The non-pigmented gamma chains may constitute additional components.</text>
</comment>
<comment type="subcellular location">
    <subcellularLocation>
        <location>Cell inner membrane</location>
        <topology>Single-pass type II membrane protein</topology>
    </subcellularLocation>
</comment>
<comment type="similarity">
    <text evidence="3">Belongs to the antenna complex beta subunit family.</text>
</comment>
<proteinExistence type="evidence at protein level"/>
<protein>
    <recommendedName>
        <fullName>Light-harvesting protein B-800/850 beta chain</fullName>
    </recommendedName>
    <alternativeName>
        <fullName>Antenna pigment protein beta chain</fullName>
    </alternativeName>
    <alternativeName>
        <fullName>LH-3B</fullName>
    </alternativeName>
</protein>
<dbReference type="EMBL" id="K02337">
    <property type="protein sequence ID" value="AAA26132.1"/>
    <property type="molecule type" value="Genomic_DNA"/>
</dbReference>
<dbReference type="EMBL" id="M28510">
    <property type="protein sequence ID" value="AAA26161.1"/>
    <property type="molecule type" value="Genomic_DNA"/>
</dbReference>
<dbReference type="PIR" id="A21901">
    <property type="entry name" value="LBRF8C"/>
</dbReference>
<dbReference type="RefSeq" id="WP_013068239.1">
    <property type="nucleotide sequence ID" value="NZ_CP061202.1"/>
</dbReference>
<dbReference type="SMR" id="P07368"/>
<dbReference type="GeneID" id="31491357"/>
<dbReference type="OrthoDB" id="7391998at2"/>
<dbReference type="GO" id="GO:0005886">
    <property type="term" value="C:plasma membrane"/>
    <property type="evidence" value="ECO:0007669"/>
    <property type="project" value="UniProtKB-SubCell"/>
</dbReference>
<dbReference type="GO" id="GO:0030077">
    <property type="term" value="C:plasma membrane light-harvesting complex"/>
    <property type="evidence" value="ECO:0007669"/>
    <property type="project" value="InterPro"/>
</dbReference>
<dbReference type="GO" id="GO:0042314">
    <property type="term" value="F:bacteriochlorophyll binding"/>
    <property type="evidence" value="ECO:0007669"/>
    <property type="project" value="UniProtKB-KW"/>
</dbReference>
<dbReference type="GO" id="GO:0045156">
    <property type="term" value="F:electron transporter, transferring electrons within the cyclic electron transport pathway of photosynthesis activity"/>
    <property type="evidence" value="ECO:0007669"/>
    <property type="project" value="InterPro"/>
</dbReference>
<dbReference type="GO" id="GO:0046872">
    <property type="term" value="F:metal ion binding"/>
    <property type="evidence" value="ECO:0007669"/>
    <property type="project" value="UniProtKB-KW"/>
</dbReference>
<dbReference type="GO" id="GO:0019684">
    <property type="term" value="P:photosynthesis, light reaction"/>
    <property type="evidence" value="ECO:0007669"/>
    <property type="project" value="InterPro"/>
</dbReference>
<dbReference type="Gene3D" id="1.20.5.250">
    <property type="match status" value="1"/>
</dbReference>
<dbReference type="InterPro" id="IPR000066">
    <property type="entry name" value="Antenna_a/b"/>
</dbReference>
<dbReference type="InterPro" id="IPR023623">
    <property type="entry name" value="Antenna_beta_CS"/>
</dbReference>
<dbReference type="InterPro" id="IPR023624">
    <property type="entry name" value="Antenna_beta_dom_sf"/>
</dbReference>
<dbReference type="InterPro" id="IPR002362">
    <property type="entry name" value="LHB-1/5"/>
</dbReference>
<dbReference type="InterPro" id="IPR035889">
    <property type="entry name" value="Light-harvesting_complex"/>
</dbReference>
<dbReference type="Pfam" id="PF00556">
    <property type="entry name" value="LHC"/>
    <property type="match status" value="1"/>
</dbReference>
<dbReference type="PIRSF" id="PIRSF002900">
    <property type="entry name" value="Antenna_beta"/>
    <property type="match status" value="1"/>
</dbReference>
<dbReference type="PRINTS" id="PR00674">
    <property type="entry name" value="LIGHTHARVSTB"/>
</dbReference>
<dbReference type="SUPFAM" id="SSF56918">
    <property type="entry name" value="Light-harvesting complex subunits"/>
    <property type="match status" value="1"/>
</dbReference>
<dbReference type="PROSITE" id="PS00969">
    <property type="entry name" value="ANTENNA_COMP_BETA"/>
    <property type="match status" value="1"/>
</dbReference>
<reference key="1">
    <citation type="journal article" date="1985" name="Proc. Natl. Acad. Sci. U.S.A.">
        <title>Light-harvesting II (B800-B850 complex) structural genes from Rhodopseudomonas capsulata.</title>
        <authorList>
            <person name="Youvan D.C."/>
            <person name="Ismail S."/>
        </authorList>
    </citation>
    <scope>NUCLEOTIDE SEQUENCE [GENOMIC DNA]</scope>
</reference>
<reference key="2">
    <citation type="journal article" date="1989" name="J. Bacteriol.">
        <title>Genes downstream from pucB and pucA are essential for formation of the B800-850 complex of Rhodobacter capsulatus.</title>
        <authorList>
            <person name="Tichy H.V."/>
            <person name="Oberle B."/>
            <person name="Stiehle H."/>
            <person name="Schiltz E."/>
            <person name="Drews G."/>
        </authorList>
    </citation>
    <scope>NUCLEOTIDE SEQUENCE [GENOMIC DNA]</scope>
</reference>
<reference key="3">
    <citation type="journal article" date="1985" name="FEBS Lett.">
        <title>The complete amino-acid sequence of the small bacteriochlorophyll-binding polypeptide B800-850-beta from light-harvesting complex B800-850 of Rhodopseudomonas capsulata.</title>
        <authorList>
            <person name="Tadros M.H."/>
            <person name="Frank R."/>
            <person name="Drews G."/>
        </authorList>
    </citation>
    <scope>PROTEIN SEQUENCE</scope>
    <scope>FORMYLATION AT MET-1</scope>
</reference>
<accession>P07368</accession>
<evidence type="ECO:0000255" key="1"/>
<evidence type="ECO:0000269" key="2">
    <source ref="3"/>
</evidence>
<evidence type="ECO:0000305" key="3"/>
<sequence length="49" mass="5155">MTDDKAGPSGLSLKEAEEIHSYLIDGTRVFGAMALVAHILSAIATPWLG</sequence>
<organism>
    <name type="scientific">Rhodobacter capsulatus</name>
    <name type="common">Rhodopseudomonas capsulata</name>
    <dbReference type="NCBI Taxonomy" id="1061"/>
    <lineage>
        <taxon>Bacteria</taxon>
        <taxon>Pseudomonadati</taxon>
        <taxon>Pseudomonadota</taxon>
        <taxon>Alphaproteobacteria</taxon>
        <taxon>Rhodobacterales</taxon>
        <taxon>Rhodobacter group</taxon>
        <taxon>Rhodobacter</taxon>
    </lineage>
</organism>
<keyword id="KW-0042">Antenna complex</keyword>
<keyword id="KW-0076">Bacteriochlorophyll</keyword>
<keyword id="KW-0997">Cell inner membrane</keyword>
<keyword id="KW-1003">Cell membrane</keyword>
<keyword id="KW-0148">Chlorophyll</keyword>
<keyword id="KW-0157">Chromophore</keyword>
<keyword id="KW-0903">Direct protein sequencing</keyword>
<keyword id="KW-0291">Formylation</keyword>
<keyword id="KW-0437">Light-harvesting polypeptide</keyword>
<keyword id="KW-0460">Magnesium</keyword>
<keyword id="KW-0472">Membrane</keyword>
<keyword id="KW-0479">Metal-binding</keyword>
<keyword id="KW-0812">Transmembrane</keyword>
<keyword id="KW-1133">Transmembrane helix</keyword>